<comment type="function">
    <text evidence="1">Catalyzes the NADPH-dependent reduction of L-glutamate 5-phosphate into L-glutamate 5-semialdehyde and phosphate. The product spontaneously undergoes cyclization to form 1-pyrroline-5-carboxylate.</text>
</comment>
<comment type="catalytic activity">
    <reaction evidence="1">
        <text>L-glutamate 5-semialdehyde + phosphate + NADP(+) = L-glutamyl 5-phosphate + NADPH + H(+)</text>
        <dbReference type="Rhea" id="RHEA:19541"/>
        <dbReference type="ChEBI" id="CHEBI:15378"/>
        <dbReference type="ChEBI" id="CHEBI:43474"/>
        <dbReference type="ChEBI" id="CHEBI:57783"/>
        <dbReference type="ChEBI" id="CHEBI:58066"/>
        <dbReference type="ChEBI" id="CHEBI:58274"/>
        <dbReference type="ChEBI" id="CHEBI:58349"/>
        <dbReference type="EC" id="1.2.1.41"/>
    </reaction>
</comment>
<comment type="pathway">
    <text evidence="1">Amino-acid biosynthesis; L-proline biosynthesis; L-glutamate 5-semialdehyde from L-glutamate: step 2/2.</text>
</comment>
<comment type="subcellular location">
    <subcellularLocation>
        <location evidence="1">Cytoplasm</location>
    </subcellularLocation>
</comment>
<comment type="similarity">
    <text evidence="1">Belongs to the gamma-glutamyl phosphate reductase family.</text>
</comment>
<keyword id="KW-0028">Amino-acid biosynthesis</keyword>
<keyword id="KW-0963">Cytoplasm</keyword>
<keyword id="KW-0521">NADP</keyword>
<keyword id="KW-0560">Oxidoreductase</keyword>
<keyword id="KW-0641">Proline biosynthesis</keyword>
<keyword id="KW-1185">Reference proteome</keyword>
<evidence type="ECO:0000255" key="1">
    <source>
        <dbReference type="HAMAP-Rule" id="MF_00412"/>
    </source>
</evidence>
<accession>B8F6K8</accession>
<sequence length="416" mass="45386">MTMIKIAQQAKQASFELAQFGNVQKNQALFSIADALEQRTEEILVVNAKDIDYAKSQGISEAIIDRLLLTPERIRGIANDVRNVASLADPVGQVIDGGVLDSGLKIERQRVPLGVILTIYEARPNVTIDVASLCLKTGNAVILRGGKETKFTNAILVEVVQSALEQAGLPKLAVQAVTDPDRALLLELLKLDQFIDMVIPRGGAGLHQFCKENSTIPVIVGGIGVCHLYVEASADLERSLNVIANAKTQRPSTCNTLETLLVDKAIADQFLPKLAEHLCKLKVTLHSDDFSEDLQKNPQIQPLEQAKLRQEWLSLDLSVVVVDGIQQAIEHIRTYGSQHSEGILTSNYALARQFVQQVDAAAVYINASTRFTDGAQFGLGAEVAVSTQKLHARGPMGLEALTTYKWVCEGDYLTRK</sequence>
<reference key="1">
    <citation type="journal article" date="2009" name="J. Bacteriol.">
        <title>Complete genome sequence of Haemophilus parasuis SH0165.</title>
        <authorList>
            <person name="Yue M."/>
            <person name="Yang F."/>
            <person name="Yang J."/>
            <person name="Bei W."/>
            <person name="Cai X."/>
            <person name="Chen L."/>
            <person name="Dong J."/>
            <person name="Zhou R."/>
            <person name="Jin M."/>
            <person name="Jin Q."/>
            <person name="Chen H."/>
        </authorList>
    </citation>
    <scope>NUCLEOTIDE SEQUENCE [LARGE SCALE GENOMIC DNA]</scope>
    <source>
        <strain>SH0165</strain>
    </source>
</reference>
<feature type="chain" id="PRO_1000193614" description="Gamma-glutamyl phosphate reductase">
    <location>
        <begin position="1"/>
        <end position="416"/>
    </location>
</feature>
<gene>
    <name evidence="1" type="primary">proA</name>
    <name type="ordered locus">HAPS_1380</name>
</gene>
<protein>
    <recommendedName>
        <fullName evidence="1">Gamma-glutamyl phosphate reductase</fullName>
        <shortName evidence="1">GPR</shortName>
        <ecNumber evidence="1">1.2.1.41</ecNumber>
    </recommendedName>
    <alternativeName>
        <fullName evidence="1">Glutamate-5-semialdehyde dehydrogenase</fullName>
    </alternativeName>
    <alternativeName>
        <fullName evidence="1">Glutamyl-gamma-semialdehyde dehydrogenase</fullName>
        <shortName evidence="1">GSA dehydrogenase</shortName>
    </alternativeName>
</protein>
<proteinExistence type="inferred from homology"/>
<name>PROA_GLAP5</name>
<organism>
    <name type="scientific">Glaesserella parasuis serovar 5 (strain SH0165)</name>
    <name type="common">Haemophilus parasuis</name>
    <dbReference type="NCBI Taxonomy" id="557723"/>
    <lineage>
        <taxon>Bacteria</taxon>
        <taxon>Pseudomonadati</taxon>
        <taxon>Pseudomonadota</taxon>
        <taxon>Gammaproteobacteria</taxon>
        <taxon>Pasteurellales</taxon>
        <taxon>Pasteurellaceae</taxon>
        <taxon>Glaesserella</taxon>
    </lineage>
</organism>
<dbReference type="EC" id="1.2.1.41" evidence="1"/>
<dbReference type="EMBL" id="CP001321">
    <property type="protein sequence ID" value="ACL32960.1"/>
    <property type="molecule type" value="Genomic_DNA"/>
</dbReference>
<dbReference type="RefSeq" id="WP_015939757.1">
    <property type="nucleotide sequence ID" value="NC_011852.1"/>
</dbReference>
<dbReference type="SMR" id="B8F6K8"/>
<dbReference type="STRING" id="557723.HAPS_1380"/>
<dbReference type="GeneID" id="66619367"/>
<dbReference type="KEGG" id="hap:HAPS_1380"/>
<dbReference type="PATRIC" id="fig|557723.8.peg.1354"/>
<dbReference type="HOGENOM" id="CLU_030231_0_0_6"/>
<dbReference type="UniPathway" id="UPA00098">
    <property type="reaction ID" value="UER00360"/>
</dbReference>
<dbReference type="Proteomes" id="UP000006743">
    <property type="component" value="Chromosome"/>
</dbReference>
<dbReference type="GO" id="GO:0005737">
    <property type="term" value="C:cytoplasm"/>
    <property type="evidence" value="ECO:0007669"/>
    <property type="project" value="UniProtKB-SubCell"/>
</dbReference>
<dbReference type="GO" id="GO:0004350">
    <property type="term" value="F:glutamate-5-semialdehyde dehydrogenase activity"/>
    <property type="evidence" value="ECO:0007669"/>
    <property type="project" value="UniProtKB-UniRule"/>
</dbReference>
<dbReference type="GO" id="GO:0050661">
    <property type="term" value="F:NADP binding"/>
    <property type="evidence" value="ECO:0007669"/>
    <property type="project" value="InterPro"/>
</dbReference>
<dbReference type="GO" id="GO:0055129">
    <property type="term" value="P:L-proline biosynthetic process"/>
    <property type="evidence" value="ECO:0007669"/>
    <property type="project" value="UniProtKB-UniRule"/>
</dbReference>
<dbReference type="CDD" id="cd07079">
    <property type="entry name" value="ALDH_F18-19_ProA-GPR"/>
    <property type="match status" value="1"/>
</dbReference>
<dbReference type="FunFam" id="3.40.309.10:FF:000006">
    <property type="entry name" value="Gamma-glutamyl phosphate reductase"/>
    <property type="match status" value="1"/>
</dbReference>
<dbReference type="Gene3D" id="3.40.605.10">
    <property type="entry name" value="Aldehyde Dehydrogenase, Chain A, domain 1"/>
    <property type="match status" value="1"/>
</dbReference>
<dbReference type="Gene3D" id="3.40.309.10">
    <property type="entry name" value="Aldehyde Dehydrogenase, Chain A, domain 2"/>
    <property type="match status" value="1"/>
</dbReference>
<dbReference type="HAMAP" id="MF_00412">
    <property type="entry name" value="ProA"/>
    <property type="match status" value="1"/>
</dbReference>
<dbReference type="InterPro" id="IPR016161">
    <property type="entry name" value="Ald_DH/histidinol_DH"/>
</dbReference>
<dbReference type="InterPro" id="IPR016163">
    <property type="entry name" value="Ald_DH_C"/>
</dbReference>
<dbReference type="InterPro" id="IPR016162">
    <property type="entry name" value="Ald_DH_N"/>
</dbReference>
<dbReference type="InterPro" id="IPR015590">
    <property type="entry name" value="Aldehyde_DH_dom"/>
</dbReference>
<dbReference type="InterPro" id="IPR020593">
    <property type="entry name" value="G-glutamylP_reductase_CS"/>
</dbReference>
<dbReference type="InterPro" id="IPR012134">
    <property type="entry name" value="Glu-5-SA_DH"/>
</dbReference>
<dbReference type="InterPro" id="IPR000965">
    <property type="entry name" value="GPR_dom"/>
</dbReference>
<dbReference type="NCBIfam" id="NF001221">
    <property type="entry name" value="PRK00197.1"/>
    <property type="match status" value="1"/>
</dbReference>
<dbReference type="NCBIfam" id="TIGR00407">
    <property type="entry name" value="proA"/>
    <property type="match status" value="1"/>
</dbReference>
<dbReference type="PANTHER" id="PTHR11063:SF8">
    <property type="entry name" value="DELTA-1-PYRROLINE-5-CARBOXYLATE SYNTHASE"/>
    <property type="match status" value="1"/>
</dbReference>
<dbReference type="PANTHER" id="PTHR11063">
    <property type="entry name" value="GLUTAMATE SEMIALDEHYDE DEHYDROGENASE"/>
    <property type="match status" value="1"/>
</dbReference>
<dbReference type="Pfam" id="PF00171">
    <property type="entry name" value="Aldedh"/>
    <property type="match status" value="1"/>
</dbReference>
<dbReference type="PIRSF" id="PIRSF000151">
    <property type="entry name" value="GPR"/>
    <property type="match status" value="1"/>
</dbReference>
<dbReference type="SUPFAM" id="SSF53720">
    <property type="entry name" value="ALDH-like"/>
    <property type="match status" value="1"/>
</dbReference>
<dbReference type="PROSITE" id="PS01223">
    <property type="entry name" value="PROA"/>
    <property type="match status" value="1"/>
</dbReference>